<name>Y027_MYCTU</name>
<keyword id="KW-1185">Reference proteome</keyword>
<feature type="chain" id="PRO_0000103644" description="Uncharacterized protein Rv0027">
    <location>
        <begin position="1"/>
        <end position="105"/>
    </location>
</feature>
<proteinExistence type="predicted"/>
<organism>
    <name type="scientific">Mycobacterium tuberculosis (strain ATCC 25618 / H37Rv)</name>
    <dbReference type="NCBI Taxonomy" id="83332"/>
    <lineage>
        <taxon>Bacteria</taxon>
        <taxon>Bacillati</taxon>
        <taxon>Actinomycetota</taxon>
        <taxon>Actinomycetes</taxon>
        <taxon>Mycobacteriales</taxon>
        <taxon>Mycobacteriaceae</taxon>
        <taxon>Mycobacterium</taxon>
        <taxon>Mycobacterium tuberculosis complex</taxon>
    </lineage>
</organism>
<accession>P9WM99</accession>
<accession>L0T264</accession>
<accession>P64667</accession>
<accession>P71597</accession>
<gene>
    <name type="ordered locus">Rv0027</name>
    <name type="ORF">MTCY10H4.27</name>
</gene>
<dbReference type="EMBL" id="AL123456">
    <property type="protein sequence ID" value="CCP42749.1"/>
    <property type="molecule type" value="Genomic_DNA"/>
</dbReference>
<dbReference type="PIR" id="A70701">
    <property type="entry name" value="A70701"/>
</dbReference>
<dbReference type="RefSeq" id="NP_214541.1">
    <property type="nucleotide sequence ID" value="NC_000962.3"/>
</dbReference>
<dbReference type="RefSeq" id="WP_003400401.1">
    <property type="nucleotide sequence ID" value="NZ_NVQJ01000005.1"/>
</dbReference>
<dbReference type="SMR" id="P9WM99"/>
<dbReference type="STRING" id="83332.Rv0027"/>
<dbReference type="PaxDb" id="83332-Rv0027"/>
<dbReference type="DNASU" id="887054"/>
<dbReference type="GeneID" id="887054"/>
<dbReference type="KEGG" id="mtu:Rv0027"/>
<dbReference type="KEGG" id="mtv:RVBD_0027"/>
<dbReference type="TubercuList" id="Rv0027"/>
<dbReference type="eggNOG" id="ENOG5031M40">
    <property type="taxonomic scope" value="Bacteria"/>
</dbReference>
<dbReference type="InParanoid" id="P9WM99"/>
<dbReference type="OrthoDB" id="4625564at2"/>
<dbReference type="Proteomes" id="UP000001584">
    <property type="component" value="Chromosome"/>
</dbReference>
<dbReference type="GO" id="GO:0009306">
    <property type="term" value="P:protein secretion"/>
    <property type="evidence" value="ECO:0007669"/>
    <property type="project" value="InterPro"/>
</dbReference>
<dbReference type="InterPro" id="IPR022536">
    <property type="entry name" value="EspC"/>
</dbReference>
<dbReference type="Pfam" id="PF10824">
    <property type="entry name" value="T7SS_ESX_EspC"/>
    <property type="match status" value="1"/>
</dbReference>
<protein>
    <recommendedName>
        <fullName>Uncharacterized protein Rv0027</fullName>
    </recommendedName>
</protein>
<reference key="1">
    <citation type="journal article" date="1998" name="Nature">
        <title>Deciphering the biology of Mycobacterium tuberculosis from the complete genome sequence.</title>
        <authorList>
            <person name="Cole S.T."/>
            <person name="Brosch R."/>
            <person name="Parkhill J."/>
            <person name="Garnier T."/>
            <person name="Churcher C.M."/>
            <person name="Harris D.E."/>
            <person name="Gordon S.V."/>
            <person name="Eiglmeier K."/>
            <person name="Gas S."/>
            <person name="Barry C.E. III"/>
            <person name="Tekaia F."/>
            <person name="Badcock K."/>
            <person name="Basham D."/>
            <person name="Brown D."/>
            <person name="Chillingworth T."/>
            <person name="Connor R."/>
            <person name="Davies R.M."/>
            <person name="Devlin K."/>
            <person name="Feltwell T."/>
            <person name="Gentles S."/>
            <person name="Hamlin N."/>
            <person name="Holroyd S."/>
            <person name="Hornsby T."/>
            <person name="Jagels K."/>
            <person name="Krogh A."/>
            <person name="McLean J."/>
            <person name="Moule S."/>
            <person name="Murphy L.D."/>
            <person name="Oliver S."/>
            <person name="Osborne J."/>
            <person name="Quail M.A."/>
            <person name="Rajandream M.A."/>
            <person name="Rogers J."/>
            <person name="Rutter S."/>
            <person name="Seeger K."/>
            <person name="Skelton S."/>
            <person name="Squares S."/>
            <person name="Squares R."/>
            <person name="Sulston J.E."/>
            <person name="Taylor K."/>
            <person name="Whitehead S."/>
            <person name="Barrell B.G."/>
        </authorList>
    </citation>
    <scope>NUCLEOTIDE SEQUENCE [LARGE SCALE GENOMIC DNA]</scope>
    <source>
        <strain>ATCC 25618 / H37Rv</strain>
    </source>
</reference>
<sequence>MTDRIHVQPAHLRQAAAHHQQTADYLRTVPSSHDAIRESLDSLGPIFSELRDTGRELLELRKQCYQQQADNHADIAQNLRTSAAMWEQHERAASRSLGNIIDGSR</sequence>